<dbReference type="EMBL" id="AE013599">
    <property type="protein sequence ID" value="AAF57626.1"/>
    <property type="molecule type" value="Genomic_DNA"/>
</dbReference>
<dbReference type="EMBL" id="AY069775">
    <property type="protein sequence ID" value="AAL39920.1"/>
    <property type="status" value="ALT_INIT"/>
    <property type="molecule type" value="mRNA"/>
</dbReference>
<dbReference type="RefSeq" id="NP_611381.2">
    <property type="nucleotide sequence ID" value="NM_137537.4"/>
</dbReference>
<dbReference type="BioGRID" id="62844">
    <property type="interactions" value="6"/>
</dbReference>
<dbReference type="FunCoup" id="A1ZBE8">
    <property type="interactions" value="1127"/>
</dbReference>
<dbReference type="IntAct" id="A1ZBE8">
    <property type="interactions" value="5"/>
</dbReference>
<dbReference type="STRING" id="7227.FBpp0303087"/>
<dbReference type="iPTMnet" id="A1ZBE8"/>
<dbReference type="PaxDb" id="7227-FBpp0085810"/>
<dbReference type="EnsemblMetazoa" id="FBtr0086628">
    <property type="protein sequence ID" value="FBpp0085810"/>
    <property type="gene ID" value="FBgn0034400"/>
</dbReference>
<dbReference type="GeneID" id="37176"/>
<dbReference type="KEGG" id="dme:Dmel_CG15099"/>
<dbReference type="UCSC" id="CG15099-RA">
    <property type="organism name" value="d. melanogaster"/>
</dbReference>
<dbReference type="AGR" id="FB:FBgn0034400"/>
<dbReference type="FlyBase" id="FBgn0034400">
    <property type="gene designation" value="CG15099"/>
</dbReference>
<dbReference type="VEuPathDB" id="VectorBase:FBgn0034400"/>
<dbReference type="eggNOG" id="KOG3613">
    <property type="taxonomic scope" value="Eukaryota"/>
</dbReference>
<dbReference type="GeneTree" id="ENSGT00390000016421"/>
<dbReference type="HOGENOM" id="CLU_001045_0_0_1"/>
<dbReference type="InParanoid" id="A1ZBE8"/>
<dbReference type="OMA" id="LHHGCNF"/>
<dbReference type="OrthoDB" id="297643at2759"/>
<dbReference type="PhylomeDB" id="A1ZBE8"/>
<dbReference type="BioGRID-ORCS" id="37176">
    <property type="hits" value="0 hits in 3 CRISPR screens"/>
</dbReference>
<dbReference type="GenomeRNAi" id="37176"/>
<dbReference type="PRO" id="PR:A1ZBE8"/>
<dbReference type="Proteomes" id="UP000000803">
    <property type="component" value="Chromosome 2R"/>
</dbReference>
<dbReference type="Bgee" id="FBgn0034400">
    <property type="expression patterns" value="Expressed in adult midgut enterocyte in digestive tract and 168 other cell types or tissues"/>
</dbReference>
<dbReference type="ExpressionAtlas" id="A1ZBE8">
    <property type="expression patterns" value="baseline and differential"/>
</dbReference>
<dbReference type="GO" id="GO:0005829">
    <property type="term" value="C:cytosol"/>
    <property type="evidence" value="ECO:0007669"/>
    <property type="project" value="GOC"/>
</dbReference>
<dbReference type="GO" id="GO:0005768">
    <property type="term" value="C:endosome"/>
    <property type="evidence" value="ECO:0000318"/>
    <property type="project" value="GO_Central"/>
</dbReference>
<dbReference type="GO" id="GO:0000139">
    <property type="term" value="C:Golgi membrane"/>
    <property type="evidence" value="ECO:0007669"/>
    <property type="project" value="UniProtKB-SubCell"/>
</dbReference>
<dbReference type="GO" id="GO:0005802">
    <property type="term" value="C:trans-Golgi network"/>
    <property type="evidence" value="ECO:0000318"/>
    <property type="project" value="GO_Central"/>
</dbReference>
<dbReference type="GO" id="GO:0006895">
    <property type="term" value="P:Golgi to endosome transport"/>
    <property type="evidence" value="ECO:0007669"/>
    <property type="project" value="InterPro"/>
</dbReference>
<dbReference type="GO" id="GO:0015031">
    <property type="term" value="P:protein transport"/>
    <property type="evidence" value="ECO:0007669"/>
    <property type="project" value="UniProtKB-KW"/>
</dbReference>
<dbReference type="InterPro" id="IPR040314">
    <property type="entry name" value="DOP1"/>
</dbReference>
<dbReference type="InterPro" id="IPR056457">
    <property type="entry name" value="DOP1_C"/>
</dbReference>
<dbReference type="InterPro" id="IPR007249">
    <property type="entry name" value="DOP1_N"/>
</dbReference>
<dbReference type="InterPro" id="IPR056459">
    <property type="entry name" value="TPR_DOP1"/>
</dbReference>
<dbReference type="InterPro" id="IPR056458">
    <property type="entry name" value="TPR_DOP1_M"/>
</dbReference>
<dbReference type="PANTHER" id="PTHR14042">
    <property type="entry name" value="DOPEY-RELATED"/>
    <property type="match status" value="1"/>
</dbReference>
<dbReference type="PANTHER" id="PTHR14042:SF24">
    <property type="entry name" value="PROTEIN DOPEY-1 HOMOLOG"/>
    <property type="match status" value="1"/>
</dbReference>
<dbReference type="Pfam" id="PF24598">
    <property type="entry name" value="DOP1_C"/>
    <property type="match status" value="1"/>
</dbReference>
<dbReference type="Pfam" id="PF04118">
    <property type="entry name" value="Dopey_N"/>
    <property type="match status" value="1"/>
</dbReference>
<dbReference type="Pfam" id="PF24601">
    <property type="entry name" value="TPR_DOP1"/>
    <property type="match status" value="1"/>
</dbReference>
<dbReference type="Pfam" id="PF24597">
    <property type="entry name" value="TPR_DOP1_M"/>
    <property type="match status" value="1"/>
</dbReference>
<gene>
    <name type="ORF">CG15099</name>
</gene>
<keyword id="KW-0333">Golgi apparatus</keyword>
<keyword id="KW-0472">Membrane</keyword>
<keyword id="KW-0597">Phosphoprotein</keyword>
<keyword id="KW-0653">Protein transport</keyword>
<keyword id="KW-1185">Reference proteome</keyword>
<keyword id="KW-0813">Transport</keyword>
<feature type="chain" id="PRO_0000297953" description="Protein DOP1 homolog">
    <location>
        <begin position="1"/>
        <end position="2599"/>
    </location>
</feature>
<feature type="region of interest" description="Disordered" evidence="2">
    <location>
        <begin position="532"/>
        <end position="571"/>
    </location>
</feature>
<feature type="region of interest" description="Disordered" evidence="2">
    <location>
        <begin position="595"/>
        <end position="701"/>
    </location>
</feature>
<feature type="region of interest" description="Disordered" evidence="2">
    <location>
        <begin position="1240"/>
        <end position="1316"/>
    </location>
</feature>
<feature type="region of interest" description="Disordered" evidence="2">
    <location>
        <begin position="1347"/>
        <end position="1368"/>
    </location>
</feature>
<feature type="region of interest" description="Disordered" evidence="2">
    <location>
        <begin position="1409"/>
        <end position="1442"/>
    </location>
</feature>
<feature type="compositionally biased region" description="Polar residues" evidence="2">
    <location>
        <begin position="534"/>
        <end position="549"/>
    </location>
</feature>
<feature type="compositionally biased region" description="Polar residues" evidence="2">
    <location>
        <begin position="595"/>
        <end position="604"/>
    </location>
</feature>
<feature type="compositionally biased region" description="Polar residues" evidence="2">
    <location>
        <begin position="625"/>
        <end position="636"/>
    </location>
</feature>
<feature type="compositionally biased region" description="Basic and acidic residues" evidence="2">
    <location>
        <begin position="1240"/>
        <end position="1251"/>
    </location>
</feature>
<feature type="compositionally biased region" description="Polar residues" evidence="2">
    <location>
        <begin position="1264"/>
        <end position="1282"/>
    </location>
</feature>
<feature type="compositionally biased region" description="Basic and acidic residues" evidence="2">
    <location>
        <begin position="1297"/>
        <end position="1309"/>
    </location>
</feature>
<feature type="compositionally biased region" description="Polar residues" evidence="2">
    <location>
        <begin position="1410"/>
        <end position="1423"/>
    </location>
</feature>
<feature type="modified residue" description="Phosphoserine" evidence="3">
    <location>
        <position position="753"/>
    </location>
</feature>
<feature type="modified residue" description="Phosphothreonine" evidence="3">
    <location>
        <position position="1355"/>
    </location>
</feature>
<feature type="modified residue" description="Phosphoserine" evidence="3">
    <location>
        <position position="1360"/>
    </location>
</feature>
<feature type="modified residue" description="Phosphoserine" evidence="3">
    <location>
        <position position="1363"/>
    </location>
</feature>
<feature type="modified residue" description="Phosphoserine" evidence="3">
    <location>
        <position position="1371"/>
    </location>
</feature>
<feature type="modified residue" description="Phosphoserine" evidence="3">
    <location>
        <position position="2525"/>
    </location>
</feature>
<feature type="sequence conflict" description="In Ref. 3; AAL39920." evidence="4" ref="3">
    <original>L</original>
    <variation>R</variation>
    <location>
        <position position="1690"/>
    </location>
</feature>
<organism>
    <name type="scientific">Drosophila melanogaster</name>
    <name type="common">Fruit fly</name>
    <dbReference type="NCBI Taxonomy" id="7227"/>
    <lineage>
        <taxon>Eukaryota</taxon>
        <taxon>Metazoa</taxon>
        <taxon>Ecdysozoa</taxon>
        <taxon>Arthropoda</taxon>
        <taxon>Hexapoda</taxon>
        <taxon>Insecta</taxon>
        <taxon>Pterygota</taxon>
        <taxon>Neoptera</taxon>
        <taxon>Endopterygota</taxon>
        <taxon>Diptera</taxon>
        <taxon>Brachycera</taxon>
        <taxon>Muscomorpha</taxon>
        <taxon>Ephydroidea</taxon>
        <taxon>Drosophilidae</taxon>
        <taxon>Drosophila</taxon>
        <taxon>Sophophora</taxon>
    </lineage>
</organism>
<name>DOP1_DROME</name>
<sequence length="2599" mass="291188">MESADALVEEQKLMAEAKYRTYMTNIDKALRNFEYSSEWADLISALGKLSKAISSNTQYQVIPRRLKIAKRLAQCMHPALPSGVHLKALETYSVIFSKTGPERLATEFIYSAGLFPLLGYAAMNVRPALLAIYETYFVPLGDKLRPALSGFLNGVLPGYDCGLDHFERISALLKQVCNAVNPMHFYTVLWESVANNAAIRLPAITYLLEHFNKRLDMQEQIYIMGHNREIMMSALCVCLNDSLILVQRNTLEFLLLGFPMHTVLLSEDDLVKLVTNGLNTILRRDMSLNRRLFSWLLGSEVAKNSPTYDTLSLDTSNAPLEEEPEPYFVKHSRHILIKALITTLRLSLECAPMDLKPYRIMLSLLDKAEIGSAVLDYVLHDIIRAMYISSGNAEALKSANLLFATFDPAYIWSYMTNMFEKACQQANSMQEKSQAGETSGKYACDVGSGDPCVLEICVLTEFLLETVSLEMYTETTRVYLPKVFLAITQLLSLHMDHISSNEITASLKLCMKIVSRVQPMITSPIKLNKLIEQSGGSSSDEKITMNSASDAGKTEAGAQGNSLEKSKSDSRLNQFAENTLHSADPNDEELIHRSASNQSVGRQSPNKKKAKSISRLSELDKDISASDTGQQSSSDLDTPRSIKKLKAKAKVPFIRSPKKQRPKDMVLIQSNTSAEVSDGPSAEEPKSAPPDQTPQFQLDEESRATQQRGFSILEKCIRQYEIFFEVYLSRKLLHIESEPKECSVKVQLQRTTSTIHTSNLFMAEQVLDHECPVRESQIERLFNLLRVDIVPRSKQLQRLLNRSLPLPASASELSSDSEAQEEKQQSLLIDGQTQRSVQQLAELQLSPSLRGAVKLAATLLVEMSTFPNCNKHVVLDKNEPELPNWLKVLCLVACFAQSDKELQVASITTLFDLISLLRSQIEHTTSPGVTFVVMLPLLKFGHVSYMEQHTRVFQLVSSILWDYLGTAGIDPAQIAALLHQLHSCLESGLVETVIGNRMQSQHLLQMQSQSRSDLGKAAIRNFQMERLAEAQLLCPTESTERLRESQARSFKKFELLWHLGRDKQTARGFEKTLLKVLDTLALPHYMSERTFVTNWLQASLLRGDLARLTKPLYKILLSASSKRVGIVHMQQLYRESETEVTPAFERDVYAISSEQGNVKYHHMETSSGNKKKSPIRNFPKKIFGVTLSGGKANKVSNFVSDKSTVATCSEATQDMNTIGLIINPLENANDFDDETDLEEPRIEIPHKETPLEQKLASAMDESEQPSQEQPANQPDNSLQYDQDITDHSDSSDFESDSELRETSIEKEDSITVSSSAGVSDDVKRFVGDCESVTDALTQHEKIKSRKTYRLTREKTPGENSLNSLEQKDHDSISELQADALPADEYFREDKKLGKRKKVLTSGEKKRLSCISKTSTDSNISGSHVEQPEQEEETEPGTESTINVEDKRRNLSLETSKLQPDMQKTLEKGKQNVEILRQNNAAAAAAAAAAAEEQISVRSSMKSTVSLTDAAHLYHNHLLIYLAIYDTRQTLYALQTLRNIICCDKRTFLCLSITTSFSSASLKQLLVRHRKSISGKGFDGSVGNSEYAQGYRGCMQLELLVTLCLFYARGYFQKESLDAQRQSPTLQDIVNNRRIQLESIELLTLICSELIEIVKGMGRGLANYIADLLARAKLQKVMLHCLNSSVCSYGLKGNTNSGSYAEQVLSFNDPQDDQLHADCFQLQLLRLLLAVIRLEHEVHQLRQDTPPAAGEDSAGNASPTRLAEGATANVKYLPNCLISQQPMFLAAVLGALQQERLRHLHRNWTDLVTSSLNCFSFGSLTNIVISVVHQLCSNLDRISKMGLPQQRHFPPDYVVSQLEALTILCHYCLLDNTQQTALSHLFNQAYPQTSSSAQSSSTGQLLNSIVHSFLSASESSTSAPAPRNPQLQAARNAVLSHLPRIMSSVAAIWDSELGQLRPVRQQLLEFLSPVSLHHGSNFLAAVAVTWQQRGIATNMNGLSIAEQFQRNSVLQACPAQLSLVSLVSSIRVMPMDSFVMTLHHVVRSPPPIHRPPAQLSIEVSALELFYFYMKSAPAPQLADAWSSLLALIRDGLNLTPPAQFALLMLLNEFVQRCPQMPFQDKKEVRELHDVTSRLVDSLSSVAGSCLEQTTWLRRNLAVKEDTDGLAKDNSVGGGGLQQYSLQAQSVLAAILSNLLDVAYGSQEKDKVVNIVTPLLYNITPYLKNHTARNVPFFYACSALLASLSGYQYTRKAWRKDMLDLLLDNAFFQMHLSCLPFWRMIMDSLMTYDNTTFRELMTRVSLSQAGSLNIFTSRDQEYEQRAMLLKRLAFVIYCSEFDQHNKYMPDIQEQLANSLRLVPMGPSVQAAVFLCFRVLLLRMSPDHVTSLWPIIIAEMVQVFLQMEQELKSESEERNQQLRLPSGIDVSWSAASGASNGYNSQTPMQHWRSVQLEACKLLELGCVLPATKLPHFQMYRWAFVGTEFDVHEEEVCLPNGSLENLATLPSALYVPHVRRVARLMDMKYTSQSPILQRPSNRHLMLHFQQLQSLQELYAFFTTLGISCPQPRNFADTENDVANCLKEIEEVLANDFLEKLPSITTPR</sequence>
<protein>
    <recommendedName>
        <fullName>Protein DOP1 homolog</fullName>
    </recommendedName>
</protein>
<proteinExistence type="evidence at protein level"/>
<comment type="function">
    <text evidence="1">May be involved in protein traffic between late Golgi and early endosomes.</text>
</comment>
<comment type="subcellular location">
    <subcellularLocation>
        <location evidence="1">Golgi apparatus membrane</location>
        <topology evidence="1">Peripheral membrane protein</topology>
    </subcellularLocation>
</comment>
<comment type="similarity">
    <text evidence="4">Belongs to the DOP1 family.</text>
</comment>
<comment type="sequence caution" evidence="4">
    <conflict type="erroneous initiation">
        <sequence resource="EMBL-CDS" id="AAL39920"/>
    </conflict>
    <text>Truncated N-terminus.</text>
</comment>
<evidence type="ECO:0000250" key="1">
    <source>
        <dbReference type="UniProtKB" id="Q03921"/>
    </source>
</evidence>
<evidence type="ECO:0000256" key="2">
    <source>
        <dbReference type="SAM" id="MobiDB-lite"/>
    </source>
</evidence>
<evidence type="ECO:0000269" key="3">
    <source>
    </source>
</evidence>
<evidence type="ECO:0000305" key="4"/>
<reference key="1">
    <citation type="journal article" date="2000" name="Science">
        <title>The genome sequence of Drosophila melanogaster.</title>
        <authorList>
            <person name="Adams M.D."/>
            <person name="Celniker S.E."/>
            <person name="Holt R.A."/>
            <person name="Evans C.A."/>
            <person name="Gocayne J.D."/>
            <person name="Amanatides P.G."/>
            <person name="Scherer S.E."/>
            <person name="Li P.W."/>
            <person name="Hoskins R.A."/>
            <person name="Galle R.F."/>
            <person name="George R.A."/>
            <person name="Lewis S.E."/>
            <person name="Richards S."/>
            <person name="Ashburner M."/>
            <person name="Henderson S.N."/>
            <person name="Sutton G.G."/>
            <person name="Wortman J.R."/>
            <person name="Yandell M.D."/>
            <person name="Zhang Q."/>
            <person name="Chen L.X."/>
            <person name="Brandon R.C."/>
            <person name="Rogers Y.-H.C."/>
            <person name="Blazej R.G."/>
            <person name="Champe M."/>
            <person name="Pfeiffer B.D."/>
            <person name="Wan K.H."/>
            <person name="Doyle C."/>
            <person name="Baxter E.G."/>
            <person name="Helt G."/>
            <person name="Nelson C.R."/>
            <person name="Miklos G.L.G."/>
            <person name="Abril J.F."/>
            <person name="Agbayani A."/>
            <person name="An H.-J."/>
            <person name="Andrews-Pfannkoch C."/>
            <person name="Baldwin D."/>
            <person name="Ballew R.M."/>
            <person name="Basu A."/>
            <person name="Baxendale J."/>
            <person name="Bayraktaroglu L."/>
            <person name="Beasley E.M."/>
            <person name="Beeson K.Y."/>
            <person name="Benos P.V."/>
            <person name="Berman B.P."/>
            <person name="Bhandari D."/>
            <person name="Bolshakov S."/>
            <person name="Borkova D."/>
            <person name="Botchan M.R."/>
            <person name="Bouck J."/>
            <person name="Brokstein P."/>
            <person name="Brottier P."/>
            <person name="Burtis K.C."/>
            <person name="Busam D.A."/>
            <person name="Butler H."/>
            <person name="Cadieu E."/>
            <person name="Center A."/>
            <person name="Chandra I."/>
            <person name="Cherry J.M."/>
            <person name="Cawley S."/>
            <person name="Dahlke C."/>
            <person name="Davenport L.B."/>
            <person name="Davies P."/>
            <person name="de Pablos B."/>
            <person name="Delcher A."/>
            <person name="Deng Z."/>
            <person name="Mays A.D."/>
            <person name="Dew I."/>
            <person name="Dietz S.M."/>
            <person name="Dodson K."/>
            <person name="Doup L.E."/>
            <person name="Downes M."/>
            <person name="Dugan-Rocha S."/>
            <person name="Dunkov B.C."/>
            <person name="Dunn P."/>
            <person name="Durbin K.J."/>
            <person name="Evangelista C.C."/>
            <person name="Ferraz C."/>
            <person name="Ferriera S."/>
            <person name="Fleischmann W."/>
            <person name="Fosler C."/>
            <person name="Gabrielian A.E."/>
            <person name="Garg N.S."/>
            <person name="Gelbart W.M."/>
            <person name="Glasser K."/>
            <person name="Glodek A."/>
            <person name="Gong F."/>
            <person name="Gorrell J.H."/>
            <person name="Gu Z."/>
            <person name="Guan P."/>
            <person name="Harris M."/>
            <person name="Harris N.L."/>
            <person name="Harvey D.A."/>
            <person name="Heiman T.J."/>
            <person name="Hernandez J.R."/>
            <person name="Houck J."/>
            <person name="Hostin D."/>
            <person name="Houston K.A."/>
            <person name="Howland T.J."/>
            <person name="Wei M.-H."/>
            <person name="Ibegwam C."/>
            <person name="Jalali M."/>
            <person name="Kalush F."/>
            <person name="Karpen G.H."/>
            <person name="Ke Z."/>
            <person name="Kennison J.A."/>
            <person name="Ketchum K.A."/>
            <person name="Kimmel B.E."/>
            <person name="Kodira C.D."/>
            <person name="Kraft C.L."/>
            <person name="Kravitz S."/>
            <person name="Kulp D."/>
            <person name="Lai Z."/>
            <person name="Lasko P."/>
            <person name="Lei Y."/>
            <person name="Levitsky A.A."/>
            <person name="Li J.H."/>
            <person name="Li Z."/>
            <person name="Liang Y."/>
            <person name="Lin X."/>
            <person name="Liu X."/>
            <person name="Mattei B."/>
            <person name="McIntosh T.C."/>
            <person name="McLeod M.P."/>
            <person name="McPherson D."/>
            <person name="Merkulov G."/>
            <person name="Milshina N.V."/>
            <person name="Mobarry C."/>
            <person name="Morris J."/>
            <person name="Moshrefi A."/>
            <person name="Mount S.M."/>
            <person name="Moy M."/>
            <person name="Murphy B."/>
            <person name="Murphy L."/>
            <person name="Muzny D.M."/>
            <person name="Nelson D.L."/>
            <person name="Nelson D.R."/>
            <person name="Nelson K.A."/>
            <person name="Nixon K."/>
            <person name="Nusskern D.R."/>
            <person name="Pacleb J.M."/>
            <person name="Palazzolo M."/>
            <person name="Pittman G.S."/>
            <person name="Pan S."/>
            <person name="Pollard J."/>
            <person name="Puri V."/>
            <person name="Reese M.G."/>
            <person name="Reinert K."/>
            <person name="Remington K."/>
            <person name="Saunders R.D.C."/>
            <person name="Scheeler F."/>
            <person name="Shen H."/>
            <person name="Shue B.C."/>
            <person name="Siden-Kiamos I."/>
            <person name="Simpson M."/>
            <person name="Skupski M.P."/>
            <person name="Smith T.J."/>
            <person name="Spier E."/>
            <person name="Spradling A.C."/>
            <person name="Stapleton M."/>
            <person name="Strong R."/>
            <person name="Sun E."/>
            <person name="Svirskas R."/>
            <person name="Tector C."/>
            <person name="Turner R."/>
            <person name="Venter E."/>
            <person name="Wang A.H."/>
            <person name="Wang X."/>
            <person name="Wang Z.-Y."/>
            <person name="Wassarman D.A."/>
            <person name="Weinstock G.M."/>
            <person name="Weissenbach J."/>
            <person name="Williams S.M."/>
            <person name="Woodage T."/>
            <person name="Worley K.C."/>
            <person name="Wu D."/>
            <person name="Yang S."/>
            <person name="Yao Q.A."/>
            <person name="Ye J."/>
            <person name="Yeh R.-F."/>
            <person name="Zaveri J.S."/>
            <person name="Zhan M."/>
            <person name="Zhang G."/>
            <person name="Zhao Q."/>
            <person name="Zheng L."/>
            <person name="Zheng X.H."/>
            <person name="Zhong F.N."/>
            <person name="Zhong W."/>
            <person name="Zhou X."/>
            <person name="Zhu S.C."/>
            <person name="Zhu X."/>
            <person name="Smith H.O."/>
            <person name="Gibbs R.A."/>
            <person name="Myers E.W."/>
            <person name="Rubin G.M."/>
            <person name="Venter J.C."/>
        </authorList>
    </citation>
    <scope>NUCLEOTIDE SEQUENCE [LARGE SCALE GENOMIC DNA]</scope>
    <source>
        <strain>Berkeley</strain>
    </source>
</reference>
<reference key="2">
    <citation type="journal article" date="2002" name="Genome Biol.">
        <title>Annotation of the Drosophila melanogaster euchromatic genome: a systematic review.</title>
        <authorList>
            <person name="Misra S."/>
            <person name="Crosby M.A."/>
            <person name="Mungall C.J."/>
            <person name="Matthews B.B."/>
            <person name="Campbell K.S."/>
            <person name="Hradecky P."/>
            <person name="Huang Y."/>
            <person name="Kaminker J.S."/>
            <person name="Millburn G.H."/>
            <person name="Prochnik S.E."/>
            <person name="Smith C.D."/>
            <person name="Tupy J.L."/>
            <person name="Whitfield E.J."/>
            <person name="Bayraktaroglu L."/>
            <person name="Berman B.P."/>
            <person name="Bettencourt B.R."/>
            <person name="Celniker S.E."/>
            <person name="de Grey A.D.N.J."/>
            <person name="Drysdale R.A."/>
            <person name="Harris N.L."/>
            <person name="Richter J."/>
            <person name="Russo S."/>
            <person name="Schroeder A.J."/>
            <person name="Shu S.Q."/>
            <person name="Stapleton M."/>
            <person name="Yamada C."/>
            <person name="Ashburner M."/>
            <person name="Gelbart W.M."/>
            <person name="Rubin G.M."/>
            <person name="Lewis S.E."/>
        </authorList>
    </citation>
    <scope>GENOME REANNOTATION</scope>
    <source>
        <strain>Berkeley</strain>
    </source>
</reference>
<reference key="3">
    <citation type="journal article" date="2002" name="Genome Biol.">
        <title>A Drosophila full-length cDNA resource.</title>
        <authorList>
            <person name="Stapleton M."/>
            <person name="Carlson J.W."/>
            <person name="Brokstein P."/>
            <person name="Yu C."/>
            <person name="Champe M."/>
            <person name="George R.A."/>
            <person name="Guarin H."/>
            <person name="Kronmiller B."/>
            <person name="Pacleb J.M."/>
            <person name="Park S."/>
            <person name="Wan K.H."/>
            <person name="Rubin G.M."/>
            <person name="Celniker S.E."/>
        </authorList>
    </citation>
    <scope>NUCLEOTIDE SEQUENCE [LARGE SCALE MRNA] OF 425-2599</scope>
    <source>
        <strain>Berkeley</strain>
        <tissue>Embryo</tissue>
    </source>
</reference>
<reference key="4">
    <citation type="journal article" date="2008" name="J. Proteome Res.">
        <title>Phosphoproteome analysis of Drosophila melanogaster embryos.</title>
        <authorList>
            <person name="Zhai B."/>
            <person name="Villen J."/>
            <person name="Beausoleil S.A."/>
            <person name="Mintseris J."/>
            <person name="Gygi S.P."/>
        </authorList>
    </citation>
    <scope>PHOSPHORYLATION [LARGE SCALE ANALYSIS] AT SER-753; THR-1355; SER-1360; SER-1363; SER-1371 AND SER-2525</scope>
    <scope>IDENTIFICATION BY MASS SPECTROMETRY</scope>
    <source>
        <tissue>Embryo</tissue>
    </source>
</reference>
<accession>A1ZBE8</accession>
<accession>Q8T9G6</accession>